<organism>
    <name type="scientific">Burkholderia mallei (strain ATCC 23344)</name>
    <dbReference type="NCBI Taxonomy" id="243160"/>
    <lineage>
        <taxon>Bacteria</taxon>
        <taxon>Pseudomonadati</taxon>
        <taxon>Pseudomonadota</taxon>
        <taxon>Betaproteobacteria</taxon>
        <taxon>Burkholderiales</taxon>
        <taxon>Burkholderiaceae</taxon>
        <taxon>Burkholderia</taxon>
        <taxon>pseudomallei group</taxon>
    </lineage>
</organism>
<feature type="chain" id="PRO_0000322671" description="UPF0758 protein BMA2230">
    <location>
        <begin position="1"/>
        <end position="278"/>
    </location>
</feature>
<feature type="domain" description="MPN" evidence="1">
    <location>
        <begin position="156"/>
        <end position="278"/>
    </location>
</feature>
<feature type="region of interest" description="Disordered" evidence="2">
    <location>
        <begin position="1"/>
        <end position="64"/>
    </location>
</feature>
<feature type="short sequence motif" description="JAMM motif" evidence="1">
    <location>
        <begin position="227"/>
        <end position="240"/>
    </location>
</feature>
<feature type="compositionally biased region" description="Low complexity" evidence="2">
    <location>
        <begin position="22"/>
        <end position="59"/>
    </location>
</feature>
<feature type="binding site" evidence="1">
    <location>
        <position position="227"/>
    </location>
    <ligand>
        <name>Zn(2+)</name>
        <dbReference type="ChEBI" id="CHEBI:29105"/>
        <note>catalytic</note>
    </ligand>
</feature>
<feature type="binding site" evidence="1">
    <location>
        <position position="229"/>
    </location>
    <ligand>
        <name>Zn(2+)</name>
        <dbReference type="ChEBI" id="CHEBI:29105"/>
        <note>catalytic</note>
    </ligand>
</feature>
<feature type="binding site" evidence="1">
    <location>
        <position position="240"/>
    </location>
    <ligand>
        <name>Zn(2+)</name>
        <dbReference type="ChEBI" id="CHEBI:29105"/>
        <note>catalytic</note>
    </ligand>
</feature>
<name>Y2230_BURMA</name>
<comment type="similarity">
    <text evidence="3">Belongs to the UPF0758 family.</text>
</comment>
<reference key="1">
    <citation type="journal article" date="2004" name="Proc. Natl. Acad. Sci. U.S.A.">
        <title>Structural flexibility in the Burkholderia mallei genome.</title>
        <authorList>
            <person name="Nierman W.C."/>
            <person name="DeShazer D."/>
            <person name="Kim H.S."/>
            <person name="Tettelin H."/>
            <person name="Nelson K.E."/>
            <person name="Feldblyum T.V."/>
            <person name="Ulrich R.L."/>
            <person name="Ronning C.M."/>
            <person name="Brinkac L.M."/>
            <person name="Daugherty S.C."/>
            <person name="Davidsen T.D."/>
            <person name="DeBoy R.T."/>
            <person name="Dimitrov G."/>
            <person name="Dodson R.J."/>
            <person name="Durkin A.S."/>
            <person name="Gwinn M.L."/>
            <person name="Haft D.H."/>
            <person name="Khouri H.M."/>
            <person name="Kolonay J.F."/>
            <person name="Madupu R."/>
            <person name="Mohammoud Y."/>
            <person name="Nelson W.C."/>
            <person name="Radune D."/>
            <person name="Romero C.M."/>
            <person name="Sarria S."/>
            <person name="Selengut J."/>
            <person name="Shamblin C."/>
            <person name="Sullivan S.A."/>
            <person name="White O."/>
            <person name="Yu Y."/>
            <person name="Zafar N."/>
            <person name="Zhou L."/>
            <person name="Fraser C.M."/>
        </authorList>
    </citation>
    <scope>NUCLEOTIDE SEQUENCE [LARGE SCALE GENOMIC DNA]</scope>
    <source>
        <strain>ATCC 23344</strain>
    </source>
</reference>
<sequence>MQYEIVSAGEDVDDERARGRRAAAPAAPSSAVPSSAALSSAALSSAAQPTGAPPATAAARRGRDLPRERLLARGPAALSDAELVALLLGSGLPGHDVFALAHTLLARFGSLRALLDAAPDDFKGLRGIGPARTAILVAVVELARRALAEKARERPLVDSPGAVDDYLRLLIGTRPREVFVCLFLDARHRLVQTEETAHGSLTRMAVYPREIVRRALALNAAALIVAHNHPSGAVRPSAADRRLTRVLRDALALVDIKLIDHFVVGASDTFSFAQAGWI</sequence>
<protein>
    <recommendedName>
        <fullName>UPF0758 protein BMA2230</fullName>
    </recommendedName>
</protein>
<gene>
    <name type="ordered locus">BMA2230</name>
</gene>
<proteinExistence type="inferred from homology"/>
<dbReference type="EMBL" id="CP000010">
    <property type="protein sequence ID" value="AAU50257.1"/>
    <property type="molecule type" value="Genomic_DNA"/>
</dbReference>
<dbReference type="RefSeq" id="YP_103794.1">
    <property type="nucleotide sequence ID" value="NC_006348.1"/>
</dbReference>
<dbReference type="SMR" id="Q62HM6"/>
<dbReference type="KEGG" id="bma:BMA2230"/>
<dbReference type="PATRIC" id="fig|243160.12.peg.2294"/>
<dbReference type="eggNOG" id="COG2003">
    <property type="taxonomic scope" value="Bacteria"/>
</dbReference>
<dbReference type="HOGENOM" id="CLU_073529_0_1_4"/>
<dbReference type="Proteomes" id="UP000006693">
    <property type="component" value="Chromosome 1"/>
</dbReference>
<dbReference type="GO" id="GO:0046872">
    <property type="term" value="F:metal ion binding"/>
    <property type="evidence" value="ECO:0007669"/>
    <property type="project" value="UniProtKB-KW"/>
</dbReference>
<dbReference type="GO" id="GO:0008237">
    <property type="term" value="F:metallopeptidase activity"/>
    <property type="evidence" value="ECO:0007669"/>
    <property type="project" value="UniProtKB-KW"/>
</dbReference>
<dbReference type="GO" id="GO:0006508">
    <property type="term" value="P:proteolysis"/>
    <property type="evidence" value="ECO:0007669"/>
    <property type="project" value="UniProtKB-KW"/>
</dbReference>
<dbReference type="CDD" id="cd08071">
    <property type="entry name" value="MPN_DUF2466"/>
    <property type="match status" value="1"/>
</dbReference>
<dbReference type="Gene3D" id="1.10.150.20">
    <property type="entry name" value="5' to 3' exonuclease, C-terminal subdomain"/>
    <property type="match status" value="1"/>
</dbReference>
<dbReference type="Gene3D" id="3.40.140.10">
    <property type="entry name" value="Cytidine Deaminase, domain 2"/>
    <property type="match status" value="1"/>
</dbReference>
<dbReference type="InterPro" id="IPR037518">
    <property type="entry name" value="MPN"/>
</dbReference>
<dbReference type="InterPro" id="IPR025657">
    <property type="entry name" value="RadC_JAB"/>
</dbReference>
<dbReference type="InterPro" id="IPR010994">
    <property type="entry name" value="RuvA_2-like"/>
</dbReference>
<dbReference type="InterPro" id="IPR001405">
    <property type="entry name" value="UPF0758"/>
</dbReference>
<dbReference type="InterPro" id="IPR020891">
    <property type="entry name" value="UPF0758_CS"/>
</dbReference>
<dbReference type="InterPro" id="IPR046778">
    <property type="entry name" value="UPF0758_N"/>
</dbReference>
<dbReference type="NCBIfam" id="NF000642">
    <property type="entry name" value="PRK00024.1"/>
    <property type="match status" value="1"/>
</dbReference>
<dbReference type="NCBIfam" id="TIGR00608">
    <property type="entry name" value="radc"/>
    <property type="match status" value="1"/>
</dbReference>
<dbReference type="PANTHER" id="PTHR30471">
    <property type="entry name" value="DNA REPAIR PROTEIN RADC"/>
    <property type="match status" value="1"/>
</dbReference>
<dbReference type="PANTHER" id="PTHR30471:SF3">
    <property type="entry name" value="UPF0758 PROTEIN YEES-RELATED"/>
    <property type="match status" value="1"/>
</dbReference>
<dbReference type="Pfam" id="PF04002">
    <property type="entry name" value="RadC"/>
    <property type="match status" value="1"/>
</dbReference>
<dbReference type="Pfam" id="PF20582">
    <property type="entry name" value="UPF0758_N"/>
    <property type="match status" value="1"/>
</dbReference>
<dbReference type="SUPFAM" id="SSF102712">
    <property type="entry name" value="JAB1/MPN domain"/>
    <property type="match status" value="1"/>
</dbReference>
<dbReference type="SUPFAM" id="SSF47781">
    <property type="entry name" value="RuvA domain 2-like"/>
    <property type="match status" value="1"/>
</dbReference>
<dbReference type="PROSITE" id="PS50249">
    <property type="entry name" value="MPN"/>
    <property type="match status" value="1"/>
</dbReference>
<dbReference type="PROSITE" id="PS01302">
    <property type="entry name" value="UPF0758"/>
    <property type="match status" value="1"/>
</dbReference>
<accession>Q62HM6</accession>
<evidence type="ECO:0000255" key="1">
    <source>
        <dbReference type="PROSITE-ProRule" id="PRU01182"/>
    </source>
</evidence>
<evidence type="ECO:0000256" key="2">
    <source>
        <dbReference type="SAM" id="MobiDB-lite"/>
    </source>
</evidence>
<evidence type="ECO:0000305" key="3"/>
<keyword id="KW-0378">Hydrolase</keyword>
<keyword id="KW-0479">Metal-binding</keyword>
<keyword id="KW-0482">Metalloprotease</keyword>
<keyword id="KW-0645">Protease</keyword>
<keyword id="KW-1185">Reference proteome</keyword>
<keyword id="KW-0862">Zinc</keyword>